<feature type="chain" id="PRO_0000088618" description="Photosystem I P700 chlorophyll a apoprotein A2">
    <location>
        <begin position="1"/>
        <end position="734"/>
    </location>
</feature>
<feature type="transmembrane region" description="Helical; Name=I" evidence="1">
    <location>
        <begin position="46"/>
        <end position="69"/>
    </location>
</feature>
<feature type="transmembrane region" description="Helical; Name=II" evidence="1">
    <location>
        <begin position="135"/>
        <end position="158"/>
    </location>
</feature>
<feature type="transmembrane region" description="Helical; Name=III" evidence="1">
    <location>
        <begin position="175"/>
        <end position="199"/>
    </location>
</feature>
<feature type="transmembrane region" description="Helical; Name=IV" evidence="1">
    <location>
        <begin position="273"/>
        <end position="291"/>
    </location>
</feature>
<feature type="transmembrane region" description="Helical; Name=V" evidence="1">
    <location>
        <begin position="330"/>
        <end position="353"/>
    </location>
</feature>
<feature type="transmembrane region" description="Helical; Name=VI" evidence="1">
    <location>
        <begin position="369"/>
        <end position="395"/>
    </location>
</feature>
<feature type="transmembrane region" description="Helical; Name=VII" evidence="1">
    <location>
        <begin position="417"/>
        <end position="439"/>
    </location>
</feature>
<feature type="transmembrane region" description="Helical; Name=VIII" evidence="1">
    <location>
        <begin position="517"/>
        <end position="535"/>
    </location>
</feature>
<feature type="transmembrane region" description="Helical; Name=IX" evidence="1">
    <location>
        <begin position="575"/>
        <end position="596"/>
    </location>
</feature>
<feature type="transmembrane region" description="Helical; Name=X" evidence="1">
    <location>
        <begin position="643"/>
        <end position="665"/>
    </location>
</feature>
<feature type="transmembrane region" description="Helical; Name=XI" evidence="1">
    <location>
        <begin position="707"/>
        <end position="727"/>
    </location>
</feature>
<feature type="binding site" evidence="1">
    <location>
        <position position="559"/>
    </location>
    <ligand>
        <name>[4Fe-4S] cluster</name>
        <dbReference type="ChEBI" id="CHEBI:49883"/>
        <note>ligand shared between dimeric partners</note>
    </ligand>
</feature>
<feature type="binding site" evidence="1">
    <location>
        <position position="568"/>
    </location>
    <ligand>
        <name>[4Fe-4S] cluster</name>
        <dbReference type="ChEBI" id="CHEBI:49883"/>
        <note>ligand shared between dimeric partners</note>
    </ligand>
</feature>
<feature type="binding site" description="axial binding residue" evidence="1">
    <location>
        <position position="654"/>
    </location>
    <ligand>
        <name>chlorophyll a</name>
        <dbReference type="ChEBI" id="CHEBI:58416"/>
        <label>B1</label>
    </ligand>
    <ligandPart>
        <name>Mg</name>
        <dbReference type="ChEBI" id="CHEBI:25107"/>
    </ligandPart>
</feature>
<feature type="binding site" description="axial binding residue" evidence="1">
    <location>
        <position position="662"/>
    </location>
    <ligand>
        <name>chlorophyll a</name>
        <dbReference type="ChEBI" id="CHEBI:58416"/>
        <label>B3</label>
    </ligand>
    <ligandPart>
        <name>Mg</name>
        <dbReference type="ChEBI" id="CHEBI:25107"/>
    </ligandPart>
</feature>
<feature type="binding site" evidence="1">
    <location>
        <position position="670"/>
    </location>
    <ligand>
        <name>chlorophyll a</name>
        <dbReference type="ChEBI" id="CHEBI:58416"/>
        <label>B3</label>
    </ligand>
</feature>
<feature type="binding site" evidence="1">
    <location>
        <position position="671"/>
    </location>
    <ligand>
        <name>phylloquinone</name>
        <dbReference type="ChEBI" id="CHEBI:18067"/>
        <label>B</label>
    </ligand>
</feature>
<organism>
    <name type="scientific">Huperzia lucidula</name>
    <name type="common">Shining clubmoss</name>
    <name type="synonym">Lycopodium lucidulum</name>
    <dbReference type="NCBI Taxonomy" id="37429"/>
    <lineage>
        <taxon>Eukaryota</taxon>
        <taxon>Viridiplantae</taxon>
        <taxon>Streptophyta</taxon>
        <taxon>Embryophyta</taxon>
        <taxon>Tracheophyta</taxon>
        <taxon>Lycopodiopsida</taxon>
        <taxon>Lycopodiales</taxon>
        <taxon>Lycopodiaceae</taxon>
        <taxon>Huperzioideae</taxon>
        <taxon>Huperzia</taxon>
    </lineage>
</organism>
<comment type="function">
    <text evidence="1">PsaA and PsaB bind P700, the primary electron donor of photosystem I (PSI), as well as the electron acceptors A0, A1 and FX. PSI is a plastocyanin-ferredoxin oxidoreductase, converting photonic excitation into a charge separation, which transfers an electron from the donor P700 chlorophyll pair to the spectroscopically characterized acceptors A0, A1, FX, FA and FB in turn. Oxidized P700 is reduced on the lumenal side of the thylakoid membrane by plastocyanin.</text>
</comment>
<comment type="catalytic activity">
    <reaction evidence="1">
        <text>reduced [plastocyanin] + hnu + oxidized [2Fe-2S]-[ferredoxin] = oxidized [plastocyanin] + reduced [2Fe-2S]-[ferredoxin]</text>
        <dbReference type="Rhea" id="RHEA:30407"/>
        <dbReference type="Rhea" id="RHEA-COMP:10000"/>
        <dbReference type="Rhea" id="RHEA-COMP:10001"/>
        <dbReference type="Rhea" id="RHEA-COMP:10039"/>
        <dbReference type="Rhea" id="RHEA-COMP:10040"/>
        <dbReference type="ChEBI" id="CHEBI:29036"/>
        <dbReference type="ChEBI" id="CHEBI:30212"/>
        <dbReference type="ChEBI" id="CHEBI:33737"/>
        <dbReference type="ChEBI" id="CHEBI:33738"/>
        <dbReference type="ChEBI" id="CHEBI:49552"/>
        <dbReference type="EC" id="1.97.1.12"/>
    </reaction>
</comment>
<comment type="cofactor">
    <text evidence="1">P700 is a chlorophyll a/chlorophyll a' dimer, A0 is one or more chlorophyll a, A1 is one or both phylloquinones and FX is a shared 4Fe-4S iron-sulfur center.</text>
</comment>
<comment type="subunit">
    <text evidence="1">The PsaA/B heterodimer binds the P700 chlorophyll special pair and subsequent electron acceptors. PSI consists of a core antenna complex that captures photons, and an electron transfer chain that converts photonic excitation into a charge separation. The eukaryotic PSI reaction center is composed of at least 11 subunits.</text>
</comment>
<comment type="subcellular location">
    <subcellularLocation>
        <location evidence="1">Plastid</location>
        <location evidence="1">Chloroplast thylakoid membrane</location>
        <topology evidence="1">Multi-pass membrane protein</topology>
    </subcellularLocation>
</comment>
<comment type="similarity">
    <text evidence="1">Belongs to the PsaA/PsaB family.</text>
</comment>
<accession>Q5SD11</accession>
<dbReference type="EC" id="1.97.1.12" evidence="1"/>
<dbReference type="EMBL" id="AY660566">
    <property type="protein sequence ID" value="AAT80726.1"/>
    <property type="molecule type" value="Genomic_DNA"/>
</dbReference>
<dbReference type="RefSeq" id="YP_209530.1">
    <property type="nucleotide sequence ID" value="NC_006861.1"/>
</dbReference>
<dbReference type="SMR" id="Q5SD11"/>
<dbReference type="GeneID" id="3283818"/>
<dbReference type="GO" id="GO:0009535">
    <property type="term" value="C:chloroplast thylakoid membrane"/>
    <property type="evidence" value="ECO:0007669"/>
    <property type="project" value="UniProtKB-SubCell"/>
</dbReference>
<dbReference type="GO" id="GO:0009522">
    <property type="term" value="C:photosystem I"/>
    <property type="evidence" value="ECO:0007669"/>
    <property type="project" value="UniProtKB-KW"/>
</dbReference>
<dbReference type="GO" id="GO:0051539">
    <property type="term" value="F:4 iron, 4 sulfur cluster binding"/>
    <property type="evidence" value="ECO:0007669"/>
    <property type="project" value="UniProtKB-KW"/>
</dbReference>
<dbReference type="GO" id="GO:0016168">
    <property type="term" value="F:chlorophyll binding"/>
    <property type="evidence" value="ECO:0007669"/>
    <property type="project" value="UniProtKB-KW"/>
</dbReference>
<dbReference type="GO" id="GO:0009055">
    <property type="term" value="F:electron transfer activity"/>
    <property type="evidence" value="ECO:0007669"/>
    <property type="project" value="UniProtKB-UniRule"/>
</dbReference>
<dbReference type="GO" id="GO:0000287">
    <property type="term" value="F:magnesium ion binding"/>
    <property type="evidence" value="ECO:0007669"/>
    <property type="project" value="UniProtKB-UniRule"/>
</dbReference>
<dbReference type="GO" id="GO:0016491">
    <property type="term" value="F:oxidoreductase activity"/>
    <property type="evidence" value="ECO:0007669"/>
    <property type="project" value="UniProtKB-KW"/>
</dbReference>
<dbReference type="GO" id="GO:0015979">
    <property type="term" value="P:photosynthesis"/>
    <property type="evidence" value="ECO:0007669"/>
    <property type="project" value="UniProtKB-UniRule"/>
</dbReference>
<dbReference type="FunFam" id="1.20.1130.10:FF:000001">
    <property type="entry name" value="Photosystem I P700 chlorophyll a apoprotein A2"/>
    <property type="match status" value="1"/>
</dbReference>
<dbReference type="Gene3D" id="1.20.1130.10">
    <property type="entry name" value="Photosystem I PsaA/PsaB"/>
    <property type="match status" value="1"/>
</dbReference>
<dbReference type="HAMAP" id="MF_00482">
    <property type="entry name" value="PSI_PsaB"/>
    <property type="match status" value="1"/>
</dbReference>
<dbReference type="InterPro" id="IPR001280">
    <property type="entry name" value="PSI_PsaA/B"/>
</dbReference>
<dbReference type="InterPro" id="IPR020586">
    <property type="entry name" value="PSI_PsaA/B_CS"/>
</dbReference>
<dbReference type="InterPro" id="IPR036408">
    <property type="entry name" value="PSI_PsaA/B_sf"/>
</dbReference>
<dbReference type="InterPro" id="IPR006244">
    <property type="entry name" value="PSI_PsaB"/>
</dbReference>
<dbReference type="NCBIfam" id="TIGR01336">
    <property type="entry name" value="psaB"/>
    <property type="match status" value="1"/>
</dbReference>
<dbReference type="PANTHER" id="PTHR30128">
    <property type="entry name" value="OUTER MEMBRANE PROTEIN, OMPA-RELATED"/>
    <property type="match status" value="1"/>
</dbReference>
<dbReference type="PANTHER" id="PTHR30128:SF19">
    <property type="entry name" value="PHOTOSYSTEM I P700 CHLOROPHYLL A APOPROTEIN A1-RELATED"/>
    <property type="match status" value="1"/>
</dbReference>
<dbReference type="Pfam" id="PF00223">
    <property type="entry name" value="PsaA_PsaB"/>
    <property type="match status" value="1"/>
</dbReference>
<dbReference type="PIRSF" id="PIRSF002905">
    <property type="entry name" value="PSI_A"/>
    <property type="match status" value="1"/>
</dbReference>
<dbReference type="PRINTS" id="PR00257">
    <property type="entry name" value="PHOTSYSPSAAB"/>
</dbReference>
<dbReference type="SUPFAM" id="SSF81558">
    <property type="entry name" value="Photosystem I subunits PsaA/PsaB"/>
    <property type="match status" value="1"/>
</dbReference>
<dbReference type="PROSITE" id="PS00419">
    <property type="entry name" value="PHOTOSYSTEM_I_PSAAB"/>
    <property type="match status" value="1"/>
</dbReference>
<reference key="1">
    <citation type="journal article" date="2005" name="Gene">
        <title>The first complete chloroplast genome sequence of a lycophyte, Huperzia lucidula (Lycopodiaceae).</title>
        <authorList>
            <person name="Wolf P.G."/>
            <person name="Karol K.G."/>
            <person name="Mandoli D.F."/>
            <person name="Kuehl J.V."/>
            <person name="Arumuganathan K."/>
            <person name="Ellis M.W."/>
            <person name="Mishler B.D."/>
            <person name="Kelch D.G."/>
            <person name="Olmstead R.G."/>
            <person name="Boore J.L."/>
        </authorList>
    </citation>
    <scope>NUCLEOTIDE SEQUENCE [LARGE SCALE GENOMIC DNA]</scope>
</reference>
<keyword id="KW-0004">4Fe-4S</keyword>
<keyword id="KW-0148">Chlorophyll</keyword>
<keyword id="KW-0150">Chloroplast</keyword>
<keyword id="KW-0157">Chromophore</keyword>
<keyword id="KW-0249">Electron transport</keyword>
<keyword id="KW-0408">Iron</keyword>
<keyword id="KW-0411">Iron-sulfur</keyword>
<keyword id="KW-0460">Magnesium</keyword>
<keyword id="KW-0472">Membrane</keyword>
<keyword id="KW-0479">Metal-binding</keyword>
<keyword id="KW-0560">Oxidoreductase</keyword>
<keyword id="KW-0602">Photosynthesis</keyword>
<keyword id="KW-0603">Photosystem I</keyword>
<keyword id="KW-0934">Plastid</keyword>
<keyword id="KW-0793">Thylakoid</keyword>
<keyword id="KW-0812">Transmembrane</keyword>
<keyword id="KW-1133">Transmembrane helix</keyword>
<keyword id="KW-0813">Transport</keyword>
<gene>
    <name evidence="1" type="primary">psaB</name>
</gene>
<sequence length="734" mass="82062">MASRFPRFSQGLSQDPTTRRIWFGIATAHDFESHDNITEERLYQKIFASHFGQLAIIFLWTSGNLFHVAWQGNFEAWIQDPLHVRPIAHAIWDPHFGQPAIEAFTRGGASGPVNIAYPGVYQWWYTIGLRTNQDLYTGALSLLILSAIFLIAGWLHLQPKWKPSVSWFKNAESRLNHHLSGLFGVSSLAWTGHLVHVAIPESRGEHVRWDNLLTALPHPQGLGPFFAGQWSVYAQNADSSSHLFGTSQGAGTAILTFLGGFHPQTQSLWLTDIAHHHLAIAVVFIIAGHMYRTNFGIGHSMKEILEAHTPPGGRLGRGHKGLYDTINNSLHFQLGLALASLGVITSLVAQHMYSLPAYAFIAQDFTTQAALYTHHQYIAGFIMTGAFAHGAIFLIRDYNPEQNEGNVLARMLEHKEAIISHLSWASLFLGFHTLGLYVHNDVMLAFGTPEKQILIEPVSAQWIQSAHGKALYGFDVLLSSANSPAFNAGQSIWLPGWLDTINNNSNSLFLTIGPGDFLVHHAIALGLHTTTLILVKGALDARGSKLMPDKKEFGYSFPCDGPGRGGTCDISAWDAFYSAVFWMLNTIGWVTLYWHWKHITLWQGNVAQFNESSTYLMGWLRDYLWLNPSQLINGYNPFGMNSLSVWAWMFLFGHLVWAIGFMFLISWRGYWQELIETLAWAHERTPLANLVRWKDKPVALSIVQARLVGLAHFSVGYIFTYAAFLIASTSGKFG</sequence>
<protein>
    <recommendedName>
        <fullName evidence="1">Photosystem I P700 chlorophyll a apoprotein A2</fullName>
        <ecNumber evidence="1">1.97.1.12</ecNumber>
    </recommendedName>
    <alternativeName>
        <fullName evidence="1">PSI-B</fullName>
    </alternativeName>
    <alternativeName>
        <fullName evidence="1">PsaB</fullName>
    </alternativeName>
</protein>
<evidence type="ECO:0000255" key="1">
    <source>
        <dbReference type="HAMAP-Rule" id="MF_00482"/>
    </source>
</evidence>
<proteinExistence type="inferred from homology"/>
<name>PSAB_HUPLU</name>
<geneLocation type="chloroplast"/>